<feature type="chain" id="PRO_0000283420" description="F-box protein At3g17320">
    <location>
        <begin position="1"/>
        <end position="409"/>
    </location>
</feature>
<feature type="domain" description="F-box" evidence="1">
    <location>
        <begin position="1"/>
        <end position="47"/>
    </location>
</feature>
<dbReference type="EMBL" id="AB022216">
    <property type="protein sequence ID" value="BAB02736.1"/>
    <property type="status" value="ALT_SEQ"/>
    <property type="molecule type" value="Genomic_DNA"/>
</dbReference>
<dbReference type="EMBL" id="CP002686">
    <property type="protein sequence ID" value="AEE75937.1"/>
    <property type="molecule type" value="Genomic_DNA"/>
</dbReference>
<dbReference type="SMR" id="Q9LUT9"/>
<dbReference type="FunCoup" id="Q9LUT9">
    <property type="interactions" value="2"/>
</dbReference>
<dbReference type="STRING" id="3702.Q9LUT9"/>
<dbReference type="PaxDb" id="3702-AT3G17320.1"/>
<dbReference type="ProteomicsDB" id="230638"/>
<dbReference type="EnsemblPlants" id="AT3G17320.1">
    <property type="protein sequence ID" value="AT3G17320.1"/>
    <property type="gene ID" value="AT3G17320"/>
</dbReference>
<dbReference type="Gramene" id="AT3G17320.1">
    <property type="protein sequence ID" value="AT3G17320.1"/>
    <property type="gene ID" value="AT3G17320"/>
</dbReference>
<dbReference type="KEGG" id="ath:AT3G17320"/>
<dbReference type="Araport" id="AT3G17320"/>
<dbReference type="TAIR" id="AT3G17320">
    <property type="gene designation" value="FOA1"/>
</dbReference>
<dbReference type="HOGENOM" id="CLU_034692_0_0_1"/>
<dbReference type="InParanoid" id="Q9LUT9"/>
<dbReference type="OMA" id="KEFHAIM"/>
<dbReference type="OrthoDB" id="1087804at2759"/>
<dbReference type="PhylomeDB" id="Q9LUT9"/>
<dbReference type="PRO" id="PR:Q9LUT9"/>
<dbReference type="Proteomes" id="UP000006548">
    <property type="component" value="Chromosome 3"/>
</dbReference>
<dbReference type="ExpressionAtlas" id="Q9LUT9">
    <property type="expression patterns" value="baseline and differential"/>
</dbReference>
<dbReference type="CDD" id="cd22157">
    <property type="entry name" value="F-box_AtFBW1-like"/>
    <property type="match status" value="1"/>
</dbReference>
<dbReference type="Gene3D" id="1.20.1280.50">
    <property type="match status" value="1"/>
</dbReference>
<dbReference type="InterPro" id="IPR006527">
    <property type="entry name" value="F-box-assoc_dom_typ1"/>
</dbReference>
<dbReference type="InterPro" id="IPR017451">
    <property type="entry name" value="F-box-assoc_interact_dom"/>
</dbReference>
<dbReference type="InterPro" id="IPR036047">
    <property type="entry name" value="F-box-like_dom_sf"/>
</dbReference>
<dbReference type="InterPro" id="IPR001810">
    <property type="entry name" value="F-box_dom"/>
</dbReference>
<dbReference type="InterPro" id="IPR011043">
    <property type="entry name" value="Gal_Oxase/kelch_b-propeller"/>
</dbReference>
<dbReference type="InterPro" id="IPR050796">
    <property type="entry name" value="SCF_F-box_component"/>
</dbReference>
<dbReference type="NCBIfam" id="TIGR01640">
    <property type="entry name" value="F_box_assoc_1"/>
    <property type="match status" value="2"/>
</dbReference>
<dbReference type="PANTHER" id="PTHR31672">
    <property type="entry name" value="BNACNNG10540D PROTEIN"/>
    <property type="match status" value="1"/>
</dbReference>
<dbReference type="PANTHER" id="PTHR31672:SF13">
    <property type="entry name" value="F-BOX PROTEIN CPR30-LIKE"/>
    <property type="match status" value="1"/>
</dbReference>
<dbReference type="Pfam" id="PF00646">
    <property type="entry name" value="F-box"/>
    <property type="match status" value="1"/>
</dbReference>
<dbReference type="Pfam" id="PF07734">
    <property type="entry name" value="FBA_1"/>
    <property type="match status" value="1"/>
</dbReference>
<dbReference type="SMART" id="SM00256">
    <property type="entry name" value="FBOX"/>
    <property type="match status" value="1"/>
</dbReference>
<dbReference type="SUPFAM" id="SSF81383">
    <property type="entry name" value="F-box domain"/>
    <property type="match status" value="1"/>
</dbReference>
<dbReference type="SUPFAM" id="SSF50965">
    <property type="entry name" value="Galactose oxidase, central domain"/>
    <property type="match status" value="1"/>
</dbReference>
<dbReference type="PROSITE" id="PS50181">
    <property type="entry name" value="FBOX"/>
    <property type="match status" value="1"/>
</dbReference>
<gene>
    <name type="ordered locus">At3g17320</name>
    <name type="ORF">MGD8.16</name>
</gene>
<name>FB150_ARATH</name>
<accession>Q9LUT9</accession>
<evidence type="ECO:0000255" key="1">
    <source>
        <dbReference type="PROSITE-ProRule" id="PRU00080"/>
    </source>
</evidence>
<evidence type="ECO:0000305" key="2"/>
<protein>
    <recommendedName>
        <fullName>F-box protein At3g17320</fullName>
    </recommendedName>
</protein>
<keyword id="KW-1185">Reference proteome</keyword>
<sequence length="409" mass="47289">MTKISDLPRDLAEEVLSRVPVTYLRAIRFTCKKWNTLTKRRSFTKKLIGQEKAEAKVKEFHAIMTLNSRLHLMSVNLDGIHKDENVESSIKQKGKLISLTVADPDRIVISQVYHCDGLLLCITNEINSRLVVWNPYSGQTRWIEPRTSYREWDIYALGYESKNNAKRSYKILRYLDAYEDMGDMSVEPRTRVCEFEIYSLDTNSWKVIEVTTDWDLCFLHRGVTLKGNTYWFAREKIPPPPRERVIEDIPLGEAEINVEIPSFLLCFDFTIEKFGSRLPLPFRPCVDDTITLSSVREEKLAVLYQRWDITWTGIWISNKIEPNAVSWSKLFFPMGRIRPLEAASGTFFVDEENKLVVLFDKGESILNPTRNTAYIVGEDGYIKPVDLGESVHKYCFPLACSYVPSSVQI</sequence>
<reference key="1">
    <citation type="journal article" date="2000" name="DNA Res.">
        <title>Structural analysis of Arabidopsis thaliana chromosome 3. I. Sequence features of the regions of 4,504,864 bp covered by sixty P1 and TAC clones.</title>
        <authorList>
            <person name="Sato S."/>
            <person name="Nakamura Y."/>
            <person name="Kaneko T."/>
            <person name="Katoh T."/>
            <person name="Asamizu E."/>
            <person name="Tabata S."/>
        </authorList>
    </citation>
    <scope>NUCLEOTIDE SEQUENCE [LARGE SCALE GENOMIC DNA]</scope>
    <source>
        <strain>cv. Columbia</strain>
    </source>
</reference>
<reference key="2">
    <citation type="journal article" date="2017" name="Plant J.">
        <title>Araport11: a complete reannotation of the Arabidopsis thaliana reference genome.</title>
        <authorList>
            <person name="Cheng C.Y."/>
            <person name="Krishnakumar V."/>
            <person name="Chan A.P."/>
            <person name="Thibaud-Nissen F."/>
            <person name="Schobel S."/>
            <person name="Town C.D."/>
        </authorList>
    </citation>
    <scope>GENOME REANNOTATION</scope>
    <source>
        <strain>cv. Columbia</strain>
    </source>
</reference>
<proteinExistence type="evidence at transcript level"/>
<comment type="sequence caution" evidence="2">
    <conflict type="erroneous gene model prediction">
        <sequence resource="EMBL-CDS" id="BAB02736"/>
    </conflict>
</comment>
<organism>
    <name type="scientific">Arabidopsis thaliana</name>
    <name type="common">Mouse-ear cress</name>
    <dbReference type="NCBI Taxonomy" id="3702"/>
    <lineage>
        <taxon>Eukaryota</taxon>
        <taxon>Viridiplantae</taxon>
        <taxon>Streptophyta</taxon>
        <taxon>Embryophyta</taxon>
        <taxon>Tracheophyta</taxon>
        <taxon>Spermatophyta</taxon>
        <taxon>Magnoliopsida</taxon>
        <taxon>eudicotyledons</taxon>
        <taxon>Gunneridae</taxon>
        <taxon>Pentapetalae</taxon>
        <taxon>rosids</taxon>
        <taxon>malvids</taxon>
        <taxon>Brassicales</taxon>
        <taxon>Brassicaceae</taxon>
        <taxon>Camelineae</taxon>
        <taxon>Arabidopsis</taxon>
    </lineage>
</organism>